<protein>
    <recommendedName>
        <fullName>Cytochrome b558/566 subunit B</fullName>
    </recommendedName>
</protein>
<dbReference type="EMBL" id="AE006641">
    <property type="protein sequence ID" value="AAK42915.1"/>
    <property type="molecule type" value="Genomic_DNA"/>
</dbReference>
<dbReference type="PIR" id="D90457">
    <property type="entry name" value="D90457"/>
</dbReference>
<dbReference type="RefSeq" id="WP_009991444.1">
    <property type="nucleotide sequence ID" value="NC_002754.1"/>
</dbReference>
<dbReference type="STRING" id="273057.SSO2802"/>
<dbReference type="PaxDb" id="273057-SSO2802"/>
<dbReference type="EnsemblBacteria" id="AAK42915">
    <property type="protein sequence ID" value="AAK42915"/>
    <property type="gene ID" value="SSO2802"/>
</dbReference>
<dbReference type="GeneID" id="44128550"/>
<dbReference type="KEGG" id="sso:SSO2802"/>
<dbReference type="PATRIC" id="fig|273057.12.peg.2888"/>
<dbReference type="eggNOG" id="arCOG06016">
    <property type="taxonomic scope" value="Archaea"/>
</dbReference>
<dbReference type="HOGENOM" id="CLU_884600_0_0_2"/>
<dbReference type="InParanoid" id="P58030"/>
<dbReference type="Proteomes" id="UP000001974">
    <property type="component" value="Chromosome"/>
</dbReference>
<dbReference type="GO" id="GO:0005886">
    <property type="term" value="C:plasma membrane"/>
    <property type="evidence" value="ECO:0007669"/>
    <property type="project" value="UniProtKB-SubCell"/>
</dbReference>
<dbReference type="InterPro" id="IPR017573">
    <property type="entry name" value="Cyt_b558/566_suB"/>
</dbReference>
<dbReference type="NCBIfam" id="TIGR03155">
    <property type="entry name" value="sulfolob_CbsB"/>
    <property type="match status" value="1"/>
</dbReference>
<organism>
    <name type="scientific">Saccharolobus solfataricus (strain ATCC 35092 / DSM 1617 / JCM 11322 / P2)</name>
    <name type="common">Sulfolobus solfataricus</name>
    <dbReference type="NCBI Taxonomy" id="273057"/>
    <lineage>
        <taxon>Archaea</taxon>
        <taxon>Thermoproteota</taxon>
        <taxon>Thermoprotei</taxon>
        <taxon>Sulfolobales</taxon>
        <taxon>Sulfolobaceae</taxon>
        <taxon>Saccharolobus</taxon>
    </lineage>
</organism>
<name>CBSB_SACS2</name>
<proteinExistence type="predicted"/>
<keyword id="KW-1003">Cell membrane</keyword>
<keyword id="KW-0249">Electron transport</keyword>
<keyword id="KW-0472">Membrane</keyword>
<keyword id="KW-1185">Reference proteome</keyword>
<keyword id="KW-0812">Transmembrane</keyword>
<keyword id="KW-1133">Transmembrane helix</keyword>
<keyword id="KW-0813">Transport</keyword>
<reference key="1">
    <citation type="journal article" date="2001" name="Proc. Natl. Acad. Sci. U.S.A.">
        <title>The complete genome of the crenarchaeon Sulfolobus solfataricus P2.</title>
        <authorList>
            <person name="She Q."/>
            <person name="Singh R.K."/>
            <person name="Confalonieri F."/>
            <person name="Zivanovic Y."/>
            <person name="Allard G."/>
            <person name="Awayez M.J."/>
            <person name="Chan-Weiher C.C.-Y."/>
            <person name="Clausen I.G."/>
            <person name="Curtis B.A."/>
            <person name="De Moors A."/>
            <person name="Erauso G."/>
            <person name="Fletcher C."/>
            <person name="Gordon P.M.K."/>
            <person name="Heikamp-de Jong I."/>
            <person name="Jeffries A.C."/>
            <person name="Kozera C.J."/>
            <person name="Medina N."/>
            <person name="Peng X."/>
            <person name="Thi-Ngoc H.P."/>
            <person name="Redder P."/>
            <person name="Schenk M.E."/>
            <person name="Theriault C."/>
            <person name="Tolstrup N."/>
            <person name="Charlebois R.L."/>
            <person name="Doolittle W.F."/>
            <person name="Duguet M."/>
            <person name="Gaasterland T."/>
            <person name="Garrett R.A."/>
            <person name="Ragan M.A."/>
            <person name="Sensen C.W."/>
            <person name="Van der Oost J."/>
        </authorList>
    </citation>
    <scope>NUCLEOTIDE SEQUENCE [LARGE SCALE GENOMIC DNA]</scope>
    <source>
        <strain>ATCC 35092 / DSM 1617 / JCM 11322 / P2</strain>
    </source>
</reference>
<feature type="chain" id="PRO_0000089386" description="Cytochrome b558/566 subunit B">
    <location>
        <begin position="1"/>
        <end position="314"/>
    </location>
</feature>
<feature type="transmembrane region" description="Helical" evidence="1">
    <location>
        <begin position="47"/>
        <end position="67"/>
    </location>
</feature>
<feature type="transmembrane region" description="Helical" evidence="1">
    <location>
        <begin position="76"/>
        <end position="96"/>
    </location>
</feature>
<feature type="transmembrane region" description="Helical" evidence="1">
    <location>
        <begin position="102"/>
        <end position="122"/>
    </location>
</feature>
<feature type="transmembrane region" description="Helical" evidence="1">
    <location>
        <begin position="127"/>
        <end position="147"/>
    </location>
</feature>
<feature type="transmembrane region" description="Helical" evidence="1">
    <location>
        <begin position="155"/>
        <end position="175"/>
    </location>
</feature>
<feature type="transmembrane region" description="Helical" evidence="1">
    <location>
        <begin position="186"/>
        <end position="206"/>
    </location>
</feature>
<feature type="transmembrane region" description="Helical" evidence="1">
    <location>
        <begin position="233"/>
        <end position="253"/>
    </location>
</feature>
<feature type="transmembrane region" description="Helical" evidence="1">
    <location>
        <begin position="264"/>
        <end position="284"/>
    </location>
</feature>
<gene>
    <name type="primary">cbsB</name>
    <name type="ordered locus">SSO2802</name>
    <name type="ORF">C48_010</name>
</gene>
<sequence length="314" mass="35030">MKMVDELKGNLNSFLILLGIFSFLQFSFKQSFMFPSILPLNIPDSNLLLVIGNISFYFFFVFLLIVSMILSLTYKSLIPLTIILTISPFITLIPNYENSFLLYSLEIAILILGLASTIEGLIKSSLLSILLIPTLVLVNLGIYASILLNIFHNALFISYLTIYLISIAGYLAYVISWGKIKSLRNYIAISVGLLSMIPFIFFENIISHNRYLEILMNMILPSTLGITLYNPYHITLLVMALGLSTMGIVTSLIKGNVSSGVGYFLIITTVFLGIDGFSLLIYMLTPIIGFLVITSSEIESKRRLIDIISPTRNG</sequence>
<accession>P58030</accession>
<comment type="subcellular location">
    <subcellularLocation>
        <location evidence="2">Cell membrane</location>
        <topology evidence="2">Multi-pass membrane protein</topology>
    </subcellularLocation>
</comment>
<evidence type="ECO:0000255" key="1"/>
<evidence type="ECO:0000305" key="2"/>